<organism>
    <name type="scientific">Homo sapiens</name>
    <name type="common">Human</name>
    <dbReference type="NCBI Taxonomy" id="9606"/>
    <lineage>
        <taxon>Eukaryota</taxon>
        <taxon>Metazoa</taxon>
        <taxon>Chordata</taxon>
        <taxon>Craniata</taxon>
        <taxon>Vertebrata</taxon>
        <taxon>Euteleostomi</taxon>
        <taxon>Mammalia</taxon>
        <taxon>Eutheria</taxon>
        <taxon>Euarchontoglires</taxon>
        <taxon>Primates</taxon>
        <taxon>Haplorrhini</taxon>
        <taxon>Catarrhini</taxon>
        <taxon>Hominidae</taxon>
        <taxon>Homo</taxon>
    </lineage>
</organism>
<keyword id="KW-0002">3D-structure</keyword>
<keyword id="KW-0090">Biological rhythms</keyword>
<keyword id="KW-0963">Cytoplasm</keyword>
<keyword id="KW-1267">Proteomics identification</keyword>
<keyword id="KW-1185">Reference proteome</keyword>
<keyword id="KW-0833">Ubl conjugation pathway</keyword>
<dbReference type="EMBL" id="AF403029">
    <property type="protein sequence ID" value="AAL57348.1"/>
    <property type="molecule type" value="mRNA"/>
</dbReference>
<dbReference type="EMBL" id="AK056367">
    <property type="protein sequence ID" value="BAB71165.1"/>
    <property type="molecule type" value="mRNA"/>
</dbReference>
<dbReference type="EMBL" id="BC008324">
    <property type="protein sequence ID" value="AAH08324.1"/>
    <property type="molecule type" value="mRNA"/>
</dbReference>
<dbReference type="CCDS" id="CCDS3115.1"/>
<dbReference type="RefSeq" id="NP_543138.1">
    <property type="nucleotide sequence ID" value="NM_080862.3"/>
</dbReference>
<dbReference type="PDB" id="2V24">
    <property type="method" value="X-ray"/>
    <property type="resolution" value="2.20 A"/>
    <property type="chains" value="A=33-233"/>
</dbReference>
<dbReference type="PDB" id="6DN7">
    <property type="method" value="X-ray"/>
    <property type="resolution" value="1.40 A"/>
    <property type="chains" value="A/C=28-233"/>
</dbReference>
<dbReference type="PDB" id="6DN8">
    <property type="method" value="X-ray"/>
    <property type="resolution" value="1.75 A"/>
    <property type="chains" value="A/C/E=28-233"/>
</dbReference>
<dbReference type="PDBsum" id="2V24"/>
<dbReference type="PDBsum" id="6DN7"/>
<dbReference type="PDBsum" id="6DN8"/>
<dbReference type="SMR" id="Q96A44"/>
<dbReference type="BioGRID" id="124941">
    <property type="interactions" value="127"/>
</dbReference>
<dbReference type="ELM" id="Q96A44"/>
<dbReference type="FunCoup" id="Q96A44">
    <property type="interactions" value="364"/>
</dbReference>
<dbReference type="IntAct" id="Q96A44">
    <property type="interactions" value="121"/>
</dbReference>
<dbReference type="STRING" id="9606.ENSP00000311609"/>
<dbReference type="GlyGen" id="Q96A44">
    <property type="glycosylation" value="1 site, 1 O-linked glycan (1 site)"/>
</dbReference>
<dbReference type="iPTMnet" id="Q96A44"/>
<dbReference type="PhosphoSitePlus" id="Q96A44"/>
<dbReference type="BioMuta" id="SPSB4"/>
<dbReference type="DMDM" id="74731085"/>
<dbReference type="MassIVE" id="Q96A44"/>
<dbReference type="PaxDb" id="9606-ENSP00000311609"/>
<dbReference type="PeptideAtlas" id="Q96A44"/>
<dbReference type="ProteomicsDB" id="75907"/>
<dbReference type="Antibodypedia" id="77081">
    <property type="antibodies" value="12 antibodies from 8 providers"/>
</dbReference>
<dbReference type="DNASU" id="92369"/>
<dbReference type="Ensembl" id="ENST00000310546.3">
    <property type="protein sequence ID" value="ENSP00000311609.2"/>
    <property type="gene ID" value="ENSG00000175093.5"/>
</dbReference>
<dbReference type="GeneID" id="92369"/>
<dbReference type="KEGG" id="hsa:92369"/>
<dbReference type="MANE-Select" id="ENST00000310546.3">
    <property type="protein sequence ID" value="ENSP00000311609.2"/>
    <property type="RefSeq nucleotide sequence ID" value="NM_080862.3"/>
    <property type="RefSeq protein sequence ID" value="NP_543138.1"/>
</dbReference>
<dbReference type="UCSC" id="uc003ett.4">
    <property type="organism name" value="human"/>
</dbReference>
<dbReference type="AGR" id="HGNC:30630"/>
<dbReference type="CTD" id="92369"/>
<dbReference type="DisGeNET" id="92369"/>
<dbReference type="GeneCards" id="SPSB4"/>
<dbReference type="HGNC" id="HGNC:30630">
    <property type="gene designation" value="SPSB4"/>
</dbReference>
<dbReference type="HPA" id="ENSG00000175093">
    <property type="expression patterns" value="Tissue enhanced (pancreas, testis)"/>
</dbReference>
<dbReference type="MIM" id="611660">
    <property type="type" value="gene"/>
</dbReference>
<dbReference type="neXtProt" id="NX_Q96A44"/>
<dbReference type="OpenTargets" id="ENSG00000175093"/>
<dbReference type="PharmGKB" id="PA142670874"/>
<dbReference type="VEuPathDB" id="HostDB:ENSG00000175093"/>
<dbReference type="eggNOG" id="KOG3953">
    <property type="taxonomic scope" value="Eukaryota"/>
</dbReference>
<dbReference type="GeneTree" id="ENSGT01030000234629"/>
<dbReference type="HOGENOM" id="CLU_046756_0_1_1"/>
<dbReference type="InParanoid" id="Q96A44"/>
<dbReference type="OMA" id="HRPMAKE"/>
<dbReference type="OrthoDB" id="5547302at2759"/>
<dbReference type="PAN-GO" id="Q96A44">
    <property type="GO annotations" value="2 GO annotations based on evolutionary models"/>
</dbReference>
<dbReference type="PhylomeDB" id="Q96A44"/>
<dbReference type="TreeFam" id="TF312822"/>
<dbReference type="PathwayCommons" id="Q96A44"/>
<dbReference type="Reactome" id="R-HSA-8951664">
    <property type="pathway name" value="Neddylation"/>
</dbReference>
<dbReference type="Reactome" id="R-HSA-983168">
    <property type="pathway name" value="Antigen processing: Ubiquitination &amp; Proteasome degradation"/>
</dbReference>
<dbReference type="SignaLink" id="Q96A44"/>
<dbReference type="UniPathway" id="UPA00143"/>
<dbReference type="BioGRID-ORCS" id="92369">
    <property type="hits" value="13 hits in 1145 CRISPR screens"/>
</dbReference>
<dbReference type="ChiTaRS" id="SPSB4">
    <property type="organism name" value="human"/>
</dbReference>
<dbReference type="EvolutionaryTrace" id="Q96A44"/>
<dbReference type="GenomeRNAi" id="92369"/>
<dbReference type="Pharos" id="Q96A44">
    <property type="development level" value="Tdark"/>
</dbReference>
<dbReference type="PRO" id="PR:Q96A44"/>
<dbReference type="Proteomes" id="UP000005640">
    <property type="component" value="Chromosome 3"/>
</dbReference>
<dbReference type="RNAct" id="Q96A44">
    <property type="molecule type" value="protein"/>
</dbReference>
<dbReference type="Bgee" id="ENSG00000175093">
    <property type="expression patterns" value="Expressed in male germ line stem cell (sensu Vertebrata) in testis and 131 other cell types or tissues"/>
</dbReference>
<dbReference type="ExpressionAtlas" id="Q96A44">
    <property type="expression patterns" value="baseline and differential"/>
</dbReference>
<dbReference type="GO" id="GO:0005829">
    <property type="term" value="C:cytosol"/>
    <property type="evidence" value="ECO:0000314"/>
    <property type="project" value="UniProtKB"/>
</dbReference>
<dbReference type="GO" id="GO:0019005">
    <property type="term" value="C:SCF ubiquitin ligase complex"/>
    <property type="evidence" value="ECO:0000318"/>
    <property type="project" value="GO_Central"/>
</dbReference>
<dbReference type="GO" id="GO:1990756">
    <property type="term" value="F:ubiquitin-like ligase-substrate adaptor activity"/>
    <property type="evidence" value="ECO:0000353"/>
    <property type="project" value="UniProtKB"/>
</dbReference>
<dbReference type="GO" id="GO:0035556">
    <property type="term" value="P:intracellular signal transduction"/>
    <property type="evidence" value="ECO:0007669"/>
    <property type="project" value="InterPro"/>
</dbReference>
<dbReference type="GO" id="GO:1902916">
    <property type="term" value="P:positive regulation of protein polyubiquitination"/>
    <property type="evidence" value="ECO:0000314"/>
    <property type="project" value="UniProtKB"/>
</dbReference>
<dbReference type="GO" id="GO:0043161">
    <property type="term" value="P:proteasome-mediated ubiquitin-dependent protein catabolic process"/>
    <property type="evidence" value="ECO:0000318"/>
    <property type="project" value="GO_Central"/>
</dbReference>
<dbReference type="GO" id="GO:0016567">
    <property type="term" value="P:protein ubiquitination"/>
    <property type="evidence" value="ECO:0000314"/>
    <property type="project" value="UniProtKB"/>
</dbReference>
<dbReference type="GO" id="GO:0042752">
    <property type="term" value="P:regulation of circadian rhythm"/>
    <property type="evidence" value="ECO:0000315"/>
    <property type="project" value="UniProtKB"/>
</dbReference>
<dbReference type="GO" id="GO:0048511">
    <property type="term" value="P:rhythmic process"/>
    <property type="evidence" value="ECO:0007669"/>
    <property type="project" value="UniProtKB-KW"/>
</dbReference>
<dbReference type="GO" id="GO:0006511">
    <property type="term" value="P:ubiquitin-dependent protein catabolic process"/>
    <property type="evidence" value="ECO:0000314"/>
    <property type="project" value="UniProtKB"/>
</dbReference>
<dbReference type="CDD" id="cd12906">
    <property type="entry name" value="SPRY_SOCS1-2-4"/>
    <property type="match status" value="1"/>
</dbReference>
<dbReference type="FunFam" id="1.10.750.20:FF:000001">
    <property type="entry name" value="Ankyrin repeat and SOCS box containing 1"/>
    <property type="match status" value="1"/>
</dbReference>
<dbReference type="FunFam" id="2.60.120.920:FF:000007">
    <property type="entry name" value="SPRY domain-containing SOCS box protein 1"/>
    <property type="match status" value="1"/>
</dbReference>
<dbReference type="Gene3D" id="2.60.120.920">
    <property type="match status" value="1"/>
</dbReference>
<dbReference type="Gene3D" id="1.10.750.20">
    <property type="entry name" value="SOCS box"/>
    <property type="match status" value="1"/>
</dbReference>
<dbReference type="InterPro" id="IPR001870">
    <property type="entry name" value="B30.2/SPRY"/>
</dbReference>
<dbReference type="InterPro" id="IPR043136">
    <property type="entry name" value="B30.2/SPRY_sf"/>
</dbReference>
<dbReference type="InterPro" id="IPR013320">
    <property type="entry name" value="ConA-like_dom_sf"/>
</dbReference>
<dbReference type="InterPro" id="IPR050672">
    <property type="entry name" value="FBXO45-Fsn/SPSB_families"/>
</dbReference>
<dbReference type="InterPro" id="IPR001496">
    <property type="entry name" value="SOCS_box"/>
</dbReference>
<dbReference type="InterPro" id="IPR036036">
    <property type="entry name" value="SOCS_box-like_dom_sf"/>
</dbReference>
<dbReference type="InterPro" id="IPR003877">
    <property type="entry name" value="SPRY_dom"/>
</dbReference>
<dbReference type="PANTHER" id="PTHR12245">
    <property type="entry name" value="SPRY DOMAIN CONTAINING SOCS BOX PROTEIN"/>
    <property type="match status" value="1"/>
</dbReference>
<dbReference type="PANTHER" id="PTHR12245:SF3">
    <property type="entry name" value="SPRY DOMAIN-CONTAINING SOCS BOX PROTEIN 4"/>
    <property type="match status" value="1"/>
</dbReference>
<dbReference type="Pfam" id="PF07525">
    <property type="entry name" value="SOCS_box"/>
    <property type="match status" value="1"/>
</dbReference>
<dbReference type="Pfam" id="PF00622">
    <property type="entry name" value="SPRY"/>
    <property type="match status" value="1"/>
</dbReference>
<dbReference type="SMART" id="SM00969">
    <property type="entry name" value="SOCS_box"/>
    <property type="match status" value="1"/>
</dbReference>
<dbReference type="SMART" id="SM00449">
    <property type="entry name" value="SPRY"/>
    <property type="match status" value="1"/>
</dbReference>
<dbReference type="SUPFAM" id="SSF49899">
    <property type="entry name" value="Concanavalin A-like lectins/glucanases"/>
    <property type="match status" value="1"/>
</dbReference>
<dbReference type="SUPFAM" id="SSF158235">
    <property type="entry name" value="SOCS box-like"/>
    <property type="match status" value="1"/>
</dbReference>
<dbReference type="PROSITE" id="PS50188">
    <property type="entry name" value="B302_SPRY"/>
    <property type="match status" value="1"/>
</dbReference>
<dbReference type="PROSITE" id="PS50225">
    <property type="entry name" value="SOCS"/>
    <property type="match status" value="1"/>
</dbReference>
<proteinExistence type="evidence at protein level"/>
<sequence length="273" mass="30179">MGQKLSGSLKSVEVREPALRPAKRELRGAEPGRPARLDQLLDMPAAGLAVQLRHAWNPEDRSLNVFVKDDDRLTFHRHPVAQSTDGIRGKVGHARGLHAWQINWPARQRGTHAVVGVATARAPLHSVGYTALVGSDAESWGWDLGRSRLYHDGKNQPGVAYPAFLGPDEAFALPDSLLVVLDMDEGTLSFIVDGQYLGVAFRGLKGKKLYPVVSAVWGHCEVTMRYINGLDPEPLPLMDLCRRSIRSALGRQRLQDISSLPLPQSLKNYLQYQ</sequence>
<comment type="function">
    <text evidence="5 8 9 10">Substrate recognition component of a SCF-like ECS (Elongin BC-CUL2/5-SOCS-box protein) E3 ubiquitin-protein ligase complex which mediates the ubiquitination and subsequent proteasomal degradation of target proteins (PubMed:15601820, PubMed:21199876). Negatively regulates nitric oxide (NO) production and limits cellular toxicity in activated macrophages by mediating the ubiquitination and proteasomal degradation of NOS2 (PubMed:21199876). Acts as a bridge which links NOS2 with the ECS E3 ubiquitin ligase complex components ELOC and CUL5 (PubMed:21199876). Diminishes EphB2-dependent cell repulsive responses by mediating the ubiquitination and degradation of EphB2/CTF2 (PubMed:28931592). Regulates cellular clock function by mediating the ubiquitin/proteasome-dependent degradation of the circadian transcriptional repressor NR1D1 (PubMed:26392558).</text>
</comment>
<comment type="pathway">
    <text>Protein modification; protein ubiquitination.</text>
</comment>
<comment type="subunit">
    <text evidence="5 6 7 8 10">Component of the probable ECS(SPSB4) E3 ubiquitin-protein ligase complex which contains CUL5, RNF7/RBX2, Elongin BC complex and SPSB4 (PubMed:15601820). Interacts with CUL5; RNF7; ELOB and ELOC (PubMed:15601820). Interacts with MET (PubMed:15713673). Interacts (via B30.2/SPRY domain) with PAWR; this interaction occurs in association with the Elongin BC complex (PubMed:20561531). Interacts with NOS2 (PubMed:21199876). Interacts with EPHB2 (PubMed:28931592).</text>
</comment>
<comment type="interaction">
    <interactant intactId="EBI-2323233">
        <id>Q96A44</id>
    </interactant>
    <interactant intactId="EBI-301231">
        <id>Q15369</id>
        <label>ELOC</label>
    </interactant>
    <organismsDiffer>false</organismsDiffer>
    <experiments>3</experiments>
</comment>
<comment type="interaction">
    <interactant intactId="EBI-2323233">
        <id>Q96A44</id>
    </interactant>
    <interactant intactId="EBI-595869">
        <id>Q96IZ0</id>
        <label>PAWR</label>
    </interactant>
    <organismsDiffer>false</organismsDiffer>
    <experiments>2</experiments>
</comment>
<comment type="interaction">
    <interactant intactId="EBI-2323233">
        <id>Q96A44</id>
    </interactant>
    <interactant intactId="EBI-12157263">
        <id>P40337-2</id>
        <label>VHL</label>
    </interactant>
    <organismsDiffer>false</organismsDiffer>
    <experiments>3</experiments>
</comment>
<comment type="subcellular location">
    <subcellularLocation>
        <location evidence="11">Cytoplasm</location>
    </subcellularLocation>
    <subcellularLocation>
        <location evidence="8">Cytoplasm</location>
        <location evidence="8">Cytosol</location>
    </subcellularLocation>
    <text evidence="8">Exhibits a diffuse cytosolic localization.</text>
</comment>
<comment type="domain">
    <text evidence="1 8">The SOCS box domain mediates the interaction with the Elongin BC complex, an adapter module in different E3 ubiquitin ligase complexes (By similarity). Essential for its ability to link NOS2 and the ECS E3 ubiquitin ligase complex components ELOC and CUL5 (PubMed:21199876).</text>
</comment>
<comment type="similarity">
    <text evidence="11">Belongs to the SPSB family.</text>
</comment>
<feature type="chain" id="PRO_0000238477" description="SPRY domain-containing SOCS box protein 4">
    <location>
        <begin position="1"/>
        <end position="273"/>
    </location>
</feature>
<feature type="domain" description="B30.2/SPRY" evidence="3">
    <location>
        <begin position="34"/>
        <end position="233"/>
    </location>
</feature>
<feature type="domain" description="SOCS box" evidence="2">
    <location>
        <begin position="234"/>
        <end position="273"/>
    </location>
</feature>
<feature type="region of interest" description="Disordered" evidence="4">
    <location>
        <begin position="1"/>
        <end position="34"/>
    </location>
</feature>
<feature type="compositionally biased region" description="Basic and acidic residues" evidence="4">
    <location>
        <begin position="12"/>
        <end position="34"/>
    </location>
</feature>
<feature type="helix" evidence="14">
    <location>
        <begin position="35"/>
        <end position="42"/>
    </location>
</feature>
<feature type="helix" evidence="14">
    <location>
        <begin position="48"/>
        <end position="53"/>
    </location>
</feature>
<feature type="strand" evidence="14">
    <location>
        <begin position="55"/>
        <end position="61"/>
    </location>
</feature>
<feature type="strand" evidence="14">
    <location>
        <begin position="65"/>
        <end position="67"/>
    </location>
</feature>
<feature type="strand" evidence="14">
    <location>
        <begin position="74"/>
        <end position="77"/>
    </location>
</feature>
<feature type="strand" evidence="14">
    <location>
        <begin position="83"/>
        <end position="90"/>
    </location>
</feature>
<feature type="strand" evidence="14">
    <location>
        <begin position="93"/>
        <end position="103"/>
    </location>
</feature>
<feature type="helix" evidence="14">
    <location>
        <begin position="106"/>
        <end position="108"/>
    </location>
</feature>
<feature type="strand" evidence="14">
    <location>
        <begin position="114"/>
        <end position="118"/>
    </location>
</feature>
<feature type="strand" evidence="14">
    <location>
        <begin position="124"/>
        <end position="129"/>
    </location>
</feature>
<feature type="strand" evidence="14">
    <location>
        <begin position="139"/>
        <end position="143"/>
    </location>
</feature>
<feature type="turn" evidence="14">
    <location>
        <begin position="144"/>
        <end position="147"/>
    </location>
</feature>
<feature type="strand" evidence="14">
    <location>
        <begin position="148"/>
        <end position="152"/>
    </location>
</feature>
<feature type="turn" evidence="14">
    <location>
        <begin position="153"/>
        <end position="155"/>
    </location>
</feature>
<feature type="strand" evidence="14">
    <location>
        <begin position="159"/>
        <end position="162"/>
    </location>
</feature>
<feature type="strand" evidence="14">
    <location>
        <begin position="175"/>
        <end position="182"/>
    </location>
</feature>
<feature type="turn" evidence="14">
    <location>
        <begin position="183"/>
        <end position="186"/>
    </location>
</feature>
<feature type="strand" evidence="14">
    <location>
        <begin position="187"/>
        <end position="192"/>
    </location>
</feature>
<feature type="strand" evidence="14">
    <location>
        <begin position="195"/>
        <end position="201"/>
    </location>
</feature>
<feature type="strand" evidence="14">
    <location>
        <begin position="209"/>
        <end position="215"/>
    </location>
</feature>
<feature type="strand" evidence="13">
    <location>
        <begin position="217"/>
        <end position="219"/>
    </location>
</feature>
<feature type="strand" evidence="14">
    <location>
        <begin position="221"/>
        <end position="230"/>
    </location>
</feature>
<reference key="1">
    <citation type="submission" date="2001-07" db="EMBL/GenBank/DDBJ databases">
        <title>SOCS box proteins.</title>
        <authorList>
            <person name="Friedel E.J."/>
            <person name="Nicholson S.E."/>
            <person name="Nicola N.A."/>
            <person name="Kile B.T."/>
            <person name="Hilton D.J."/>
        </authorList>
    </citation>
    <scope>NUCLEOTIDE SEQUENCE [MRNA]</scope>
</reference>
<reference key="2">
    <citation type="journal article" date="2004" name="Nat. Genet.">
        <title>Complete sequencing and characterization of 21,243 full-length human cDNAs.</title>
        <authorList>
            <person name="Ota T."/>
            <person name="Suzuki Y."/>
            <person name="Nishikawa T."/>
            <person name="Otsuki T."/>
            <person name="Sugiyama T."/>
            <person name="Irie R."/>
            <person name="Wakamatsu A."/>
            <person name="Hayashi K."/>
            <person name="Sato H."/>
            <person name="Nagai K."/>
            <person name="Kimura K."/>
            <person name="Makita H."/>
            <person name="Sekine M."/>
            <person name="Obayashi M."/>
            <person name="Nishi T."/>
            <person name="Shibahara T."/>
            <person name="Tanaka T."/>
            <person name="Ishii S."/>
            <person name="Yamamoto J."/>
            <person name="Saito K."/>
            <person name="Kawai Y."/>
            <person name="Isono Y."/>
            <person name="Nakamura Y."/>
            <person name="Nagahari K."/>
            <person name="Murakami K."/>
            <person name="Yasuda T."/>
            <person name="Iwayanagi T."/>
            <person name="Wagatsuma M."/>
            <person name="Shiratori A."/>
            <person name="Sudo H."/>
            <person name="Hosoiri T."/>
            <person name="Kaku Y."/>
            <person name="Kodaira H."/>
            <person name="Kondo H."/>
            <person name="Sugawara M."/>
            <person name="Takahashi M."/>
            <person name="Kanda K."/>
            <person name="Yokoi T."/>
            <person name="Furuya T."/>
            <person name="Kikkawa E."/>
            <person name="Omura Y."/>
            <person name="Abe K."/>
            <person name="Kamihara K."/>
            <person name="Katsuta N."/>
            <person name="Sato K."/>
            <person name="Tanikawa M."/>
            <person name="Yamazaki M."/>
            <person name="Ninomiya K."/>
            <person name="Ishibashi T."/>
            <person name="Yamashita H."/>
            <person name="Murakawa K."/>
            <person name="Fujimori K."/>
            <person name="Tanai H."/>
            <person name="Kimata M."/>
            <person name="Watanabe M."/>
            <person name="Hiraoka S."/>
            <person name="Chiba Y."/>
            <person name="Ishida S."/>
            <person name="Ono Y."/>
            <person name="Takiguchi S."/>
            <person name="Watanabe S."/>
            <person name="Yosida M."/>
            <person name="Hotuta T."/>
            <person name="Kusano J."/>
            <person name="Kanehori K."/>
            <person name="Takahashi-Fujii A."/>
            <person name="Hara H."/>
            <person name="Tanase T.-O."/>
            <person name="Nomura Y."/>
            <person name="Togiya S."/>
            <person name="Komai F."/>
            <person name="Hara R."/>
            <person name="Takeuchi K."/>
            <person name="Arita M."/>
            <person name="Imose N."/>
            <person name="Musashino K."/>
            <person name="Yuuki H."/>
            <person name="Oshima A."/>
            <person name="Sasaki N."/>
            <person name="Aotsuka S."/>
            <person name="Yoshikawa Y."/>
            <person name="Matsunawa H."/>
            <person name="Ichihara T."/>
            <person name="Shiohata N."/>
            <person name="Sano S."/>
            <person name="Moriya S."/>
            <person name="Momiyama H."/>
            <person name="Satoh N."/>
            <person name="Takami S."/>
            <person name="Terashima Y."/>
            <person name="Suzuki O."/>
            <person name="Nakagawa S."/>
            <person name="Senoh A."/>
            <person name="Mizoguchi H."/>
            <person name="Goto Y."/>
            <person name="Shimizu F."/>
            <person name="Wakebe H."/>
            <person name="Hishigaki H."/>
            <person name="Watanabe T."/>
            <person name="Sugiyama A."/>
            <person name="Takemoto M."/>
            <person name="Kawakami B."/>
            <person name="Yamazaki M."/>
            <person name="Watanabe K."/>
            <person name="Kumagai A."/>
            <person name="Itakura S."/>
            <person name="Fukuzumi Y."/>
            <person name="Fujimori Y."/>
            <person name="Komiyama M."/>
            <person name="Tashiro H."/>
            <person name="Tanigami A."/>
            <person name="Fujiwara T."/>
            <person name="Ono T."/>
            <person name="Yamada K."/>
            <person name="Fujii Y."/>
            <person name="Ozaki K."/>
            <person name="Hirao M."/>
            <person name="Ohmori Y."/>
            <person name="Kawabata A."/>
            <person name="Hikiji T."/>
            <person name="Kobatake N."/>
            <person name="Inagaki H."/>
            <person name="Ikema Y."/>
            <person name="Okamoto S."/>
            <person name="Okitani R."/>
            <person name="Kawakami T."/>
            <person name="Noguchi S."/>
            <person name="Itoh T."/>
            <person name="Shigeta K."/>
            <person name="Senba T."/>
            <person name="Matsumura K."/>
            <person name="Nakajima Y."/>
            <person name="Mizuno T."/>
            <person name="Morinaga M."/>
            <person name="Sasaki M."/>
            <person name="Togashi T."/>
            <person name="Oyama M."/>
            <person name="Hata H."/>
            <person name="Watanabe M."/>
            <person name="Komatsu T."/>
            <person name="Mizushima-Sugano J."/>
            <person name="Satoh T."/>
            <person name="Shirai Y."/>
            <person name="Takahashi Y."/>
            <person name="Nakagawa K."/>
            <person name="Okumura K."/>
            <person name="Nagase T."/>
            <person name="Nomura N."/>
            <person name="Kikuchi H."/>
            <person name="Masuho Y."/>
            <person name="Yamashita R."/>
            <person name="Nakai K."/>
            <person name="Yada T."/>
            <person name="Nakamura Y."/>
            <person name="Ohara O."/>
            <person name="Isogai T."/>
            <person name="Sugano S."/>
        </authorList>
    </citation>
    <scope>NUCLEOTIDE SEQUENCE [LARGE SCALE MRNA]</scope>
</reference>
<reference key="3">
    <citation type="journal article" date="2004" name="Genome Res.">
        <title>The status, quality, and expansion of the NIH full-length cDNA project: the Mammalian Gene Collection (MGC).</title>
        <authorList>
            <consortium name="The MGC Project Team"/>
        </authorList>
    </citation>
    <scope>NUCLEOTIDE SEQUENCE [LARGE SCALE MRNA]</scope>
    <source>
        <tissue>Brain</tissue>
    </source>
</reference>
<reference key="4">
    <citation type="journal article" date="2004" name="Genes Dev.">
        <title>VHL-box and SOCS-box domains determine binding specificity for Cul2-Rbx1 and Cul5-Rbx2 modules of ubiquitin ligases.</title>
        <authorList>
            <person name="Kamura T."/>
            <person name="Maenaka K."/>
            <person name="Kotoshiba S."/>
            <person name="Matsumoto M."/>
            <person name="Kohda D."/>
            <person name="Conaway R.C."/>
            <person name="Conaway J.W."/>
            <person name="Nakayama K.I."/>
        </authorList>
    </citation>
    <scope>FUNCTION IN AN E3 UBIQUITIN-PROTEIN LIGASE COMPLEX</scope>
    <scope>INTERACTION WITH CUL5; RNF7; ELOB AND ELOC</scope>
</reference>
<reference key="5">
    <citation type="journal article" date="2005" name="J. Biol. Chem.">
        <title>The SPRY domain-containing SOCS box protein 1 (SSB-1) interacts with MET and enhances the hepatocyte growth factor-induced Erk-Elk-1-serum response element pathway.</title>
        <authorList>
            <person name="Wang D."/>
            <person name="Li Z."/>
            <person name="Messing E.M."/>
            <person name="Wu G."/>
        </authorList>
    </citation>
    <scope>INTERACTION WITH MET</scope>
</reference>
<reference key="6">
    <citation type="journal article" date="2011" name="J. Biol. Chem.">
        <title>Regulation of inducible nitric-oxide synthase by the SPRY domain- and SOCS box-containing proteins.</title>
        <authorList>
            <person name="Nishiya T."/>
            <person name="Matsumoto K."/>
            <person name="Maekawa S."/>
            <person name="Kajita E."/>
            <person name="Horinouchi T."/>
            <person name="Fujimuro M."/>
            <person name="Ogasawara K."/>
            <person name="Uehara T."/>
            <person name="Miwa S."/>
        </authorList>
    </citation>
    <scope>FUNCTION</scope>
    <scope>INTERACTION WITH NOS2</scope>
    <scope>SUBCELLULAR LOCATION</scope>
    <scope>DOMAIN SOCS BOX</scope>
</reference>
<reference key="7">
    <citation type="journal article" date="2015" name="Proc. Natl. Acad. Sci. U.S.A.">
        <title>Ubiquitin ligase Siah2 regulates RevErbalpha degradation and the mammalian circadian clock.</title>
        <authorList>
            <person name="DeBruyne J.P."/>
            <person name="Baggs J.E."/>
            <person name="Sato T.K."/>
            <person name="Hogenesch J.B."/>
        </authorList>
    </citation>
    <scope>FUNCTION</scope>
</reference>
<reference key="8">
    <citation type="journal article" date="2017" name="Mol. Biol. Cell">
        <title>Ubiquitin ligase SPSB4 diminishes cell repulsive responses mediated by EphB2.</title>
        <authorList>
            <person name="Okumura F."/>
            <person name="Joo-Okumura A."/>
            <person name="Obara K."/>
            <person name="Petersen A."/>
            <person name="Nishikimi A."/>
            <person name="Fukui Y."/>
            <person name="Nakatsukasa K."/>
            <person name="Kamura T."/>
        </authorList>
    </citation>
    <scope>FUNCTION</scope>
    <scope>INTERACTION WITH EPHB2</scope>
</reference>
<reference evidence="12" key="9">
    <citation type="journal article" date="2010" name="J. Mol. Biol.">
        <title>Structural basis for Par-4 recognition by the SPRY domain- and SOCS box-containing proteins SPSB1, SPSB2, and SPSB4.</title>
        <authorList>
            <person name="Filippakopoulos P."/>
            <person name="Low A."/>
            <person name="Sharpe T.D."/>
            <person name="Uppenberg J."/>
            <person name="Yao S."/>
            <person name="Kuang Z."/>
            <person name="Savitsky P."/>
            <person name="Lewis R.S."/>
            <person name="Nicholson S.E."/>
            <person name="Norton R.S."/>
            <person name="Bullock A.N."/>
        </authorList>
    </citation>
    <scope>X-RAY CRYSTALLOGRAPHY (2.20 ANGSTROMS) OF 28-233</scope>
    <scope>INTERACTION WITH PAWR</scope>
</reference>
<gene>
    <name type="primary">SPSB4</name>
    <name type="synonym">SSB4</name>
</gene>
<name>SPSB4_HUMAN</name>
<evidence type="ECO:0000250" key="1"/>
<evidence type="ECO:0000255" key="2">
    <source>
        <dbReference type="PROSITE-ProRule" id="PRU00194"/>
    </source>
</evidence>
<evidence type="ECO:0000255" key="3">
    <source>
        <dbReference type="PROSITE-ProRule" id="PRU00548"/>
    </source>
</evidence>
<evidence type="ECO:0000256" key="4">
    <source>
        <dbReference type="SAM" id="MobiDB-lite"/>
    </source>
</evidence>
<evidence type="ECO:0000269" key="5">
    <source>
    </source>
</evidence>
<evidence type="ECO:0000269" key="6">
    <source>
    </source>
</evidence>
<evidence type="ECO:0000269" key="7">
    <source>
    </source>
</evidence>
<evidence type="ECO:0000269" key="8">
    <source>
    </source>
</evidence>
<evidence type="ECO:0000269" key="9">
    <source>
    </source>
</evidence>
<evidence type="ECO:0000269" key="10">
    <source>
    </source>
</evidence>
<evidence type="ECO:0000305" key="11"/>
<evidence type="ECO:0007744" key="12">
    <source>
        <dbReference type="PDB" id="2V24"/>
    </source>
</evidence>
<evidence type="ECO:0007829" key="13">
    <source>
        <dbReference type="PDB" id="2V24"/>
    </source>
</evidence>
<evidence type="ECO:0007829" key="14">
    <source>
        <dbReference type="PDB" id="6DN7"/>
    </source>
</evidence>
<protein>
    <recommendedName>
        <fullName>SPRY domain-containing SOCS box protein 4</fullName>
        <shortName>SSB-4</shortName>
    </recommendedName>
</protein>
<accession>Q96A44</accession>